<accession>P9WJD4</accession>
<accession>L0TEQ0</accession>
<accession>O06269</accession>
<accession>Q7D573</accession>
<gene>
    <name evidence="1" type="primary">espD</name>
    <name type="synonym">snm10</name>
    <name type="ordered locus">MT3716</name>
</gene>
<protein>
    <recommendedName>
        <fullName evidence="1">ESX-1 secretion-associated protein EspD</fullName>
    </recommendedName>
</protein>
<name>ESPD_MYCTO</name>
<feature type="chain" id="PRO_0000427849" description="ESX-1 secretion-associated protein EspD">
    <location>
        <begin position="1"/>
        <end position="184"/>
    </location>
</feature>
<feature type="region of interest" description="Disordered" evidence="2">
    <location>
        <begin position="33"/>
        <end position="56"/>
    </location>
</feature>
<dbReference type="EMBL" id="AE000516">
    <property type="protein sequence ID" value="AAK48075.1"/>
    <property type="molecule type" value="Genomic_DNA"/>
</dbReference>
<dbReference type="PIR" id="G70956">
    <property type="entry name" value="G70956"/>
</dbReference>
<dbReference type="RefSeq" id="WP_003419545.1">
    <property type="nucleotide sequence ID" value="NZ_KK341227.1"/>
</dbReference>
<dbReference type="SMR" id="P9WJD4"/>
<dbReference type="GeneID" id="45427600"/>
<dbReference type="KEGG" id="mtc:MT3716"/>
<dbReference type="PATRIC" id="fig|83331.31.peg.4000"/>
<dbReference type="HOGENOM" id="CLU_108891_0_0_11"/>
<dbReference type="Proteomes" id="UP000001020">
    <property type="component" value="Chromosome"/>
</dbReference>
<dbReference type="GO" id="GO:0005576">
    <property type="term" value="C:extracellular region"/>
    <property type="evidence" value="ECO:0007669"/>
    <property type="project" value="UniProtKB-SubCell"/>
</dbReference>
<comment type="function">
    <text evidence="1">Required for ESX-1 function. Required for the maintenance of adequate cellular levels of both EspA and EspC. Facilitates EsxA secretion.</text>
</comment>
<comment type="subcellular location">
    <subcellularLocation>
        <location evidence="1">Secreted</location>
    </subcellularLocation>
</comment>
<reference key="1">
    <citation type="journal article" date="2002" name="J. Bacteriol.">
        <title>Whole-genome comparison of Mycobacterium tuberculosis clinical and laboratory strains.</title>
        <authorList>
            <person name="Fleischmann R.D."/>
            <person name="Alland D."/>
            <person name="Eisen J.A."/>
            <person name="Carpenter L."/>
            <person name="White O."/>
            <person name="Peterson J.D."/>
            <person name="DeBoy R.T."/>
            <person name="Dodson R.J."/>
            <person name="Gwinn M.L."/>
            <person name="Haft D.H."/>
            <person name="Hickey E.K."/>
            <person name="Kolonay J.F."/>
            <person name="Nelson W.C."/>
            <person name="Umayam L.A."/>
            <person name="Ermolaeva M.D."/>
            <person name="Salzberg S.L."/>
            <person name="Delcher A."/>
            <person name="Utterback T.R."/>
            <person name="Weidman J.F."/>
            <person name="Khouri H.M."/>
            <person name="Gill J."/>
            <person name="Mikula A."/>
            <person name="Bishai W."/>
            <person name="Jacobs W.R. Jr."/>
            <person name="Venter J.C."/>
            <person name="Fraser C.M."/>
        </authorList>
    </citation>
    <scope>NUCLEOTIDE SEQUENCE [LARGE SCALE GENOMIC DNA]</scope>
    <source>
        <strain>CDC 1551 / Oshkosh</strain>
    </source>
</reference>
<sequence>MDLPGNDFDSNDFDAVDLWGADGAEGWTADPIIGVGSAATPDTGPDLDNAHGQAETDTEQEIALFTVTNPPRTVSVSTLMDGRIDHVELSARVAWMSESQLASEILVIADLARQKAQSAQYAFILDRMSQQVDADEHRVALLRKTVGETWGLPSPEEAAAAEAEVFATRYSDDCPAPDDESDPW</sequence>
<evidence type="ECO:0000250" key="1">
    <source>
        <dbReference type="UniProtKB" id="P9WJD5"/>
    </source>
</evidence>
<evidence type="ECO:0000256" key="2">
    <source>
        <dbReference type="SAM" id="MobiDB-lite"/>
    </source>
</evidence>
<keyword id="KW-1185">Reference proteome</keyword>
<keyword id="KW-0964">Secreted</keyword>
<keyword id="KW-0843">Virulence</keyword>
<organism>
    <name type="scientific">Mycobacterium tuberculosis (strain CDC 1551 / Oshkosh)</name>
    <dbReference type="NCBI Taxonomy" id="83331"/>
    <lineage>
        <taxon>Bacteria</taxon>
        <taxon>Bacillati</taxon>
        <taxon>Actinomycetota</taxon>
        <taxon>Actinomycetes</taxon>
        <taxon>Mycobacteriales</taxon>
        <taxon>Mycobacteriaceae</taxon>
        <taxon>Mycobacterium</taxon>
        <taxon>Mycobacterium tuberculosis complex</taxon>
    </lineage>
</organism>
<proteinExistence type="inferred from homology"/>